<evidence type="ECO:0000250" key="1"/>
<evidence type="ECO:0000250" key="2">
    <source>
        <dbReference type="UniProtKB" id="Q9SCX3"/>
    </source>
</evidence>
<evidence type="ECO:0000256" key="3">
    <source>
        <dbReference type="SAM" id="MobiDB-lite"/>
    </source>
</evidence>
<evidence type="ECO:0000269" key="4">
    <source>
    </source>
</evidence>
<evidence type="ECO:0000305" key="5"/>
<organism>
    <name type="scientific">Arabidopsis thaliana</name>
    <name type="common">Mouse-ear cress</name>
    <dbReference type="NCBI Taxonomy" id="3702"/>
    <lineage>
        <taxon>Eukaryota</taxon>
        <taxon>Viridiplantae</taxon>
        <taxon>Streptophyta</taxon>
        <taxon>Embryophyta</taxon>
        <taxon>Tracheophyta</taxon>
        <taxon>Spermatophyta</taxon>
        <taxon>Magnoliopsida</taxon>
        <taxon>eudicotyledons</taxon>
        <taxon>Gunneridae</taxon>
        <taxon>Pentapetalae</taxon>
        <taxon>rosids</taxon>
        <taxon>malvids</taxon>
        <taxon>Brassicales</taxon>
        <taxon>Brassicaceae</taxon>
        <taxon>Camelineae</taxon>
        <taxon>Arabidopsis</taxon>
    </lineage>
</organism>
<dbReference type="EMBL" id="AJ249596">
    <property type="protein sequence ID" value="CAB64729.1"/>
    <property type="molecule type" value="mRNA"/>
</dbReference>
<dbReference type="EMBL" id="AJ249598">
    <property type="protein sequence ID" value="CAB64731.1"/>
    <property type="molecule type" value="mRNA"/>
</dbReference>
<dbReference type="EMBL" id="AB007727">
    <property type="protein sequence ID" value="BAB10029.1"/>
    <property type="molecule type" value="Genomic_DNA"/>
</dbReference>
<dbReference type="EMBL" id="CP002688">
    <property type="protein sequence ID" value="AED91764.1"/>
    <property type="molecule type" value="Genomic_DNA"/>
</dbReference>
<dbReference type="EMBL" id="BT002990">
    <property type="protein sequence ID" value="AAO22799.1"/>
    <property type="molecule type" value="mRNA"/>
</dbReference>
<dbReference type="PIR" id="T52557">
    <property type="entry name" value="T52557"/>
</dbReference>
<dbReference type="PIR" id="T52559">
    <property type="entry name" value="T52559"/>
</dbReference>
<dbReference type="RefSeq" id="NP_196772.1">
    <property type="nucleotide sequence ID" value="NM_121249.5"/>
</dbReference>
<dbReference type="SMR" id="Q84WM9"/>
<dbReference type="BioGRID" id="16362">
    <property type="interactions" value="4"/>
</dbReference>
<dbReference type="FunCoup" id="Q84WM9">
    <property type="interactions" value="3198"/>
</dbReference>
<dbReference type="STRING" id="3702.Q84WM9"/>
<dbReference type="PaxDb" id="3702-AT5G12110.1"/>
<dbReference type="ProteomicsDB" id="221914"/>
<dbReference type="EnsemblPlants" id="AT5G12110.1">
    <property type="protein sequence ID" value="AT5G12110.1"/>
    <property type="gene ID" value="AT5G12110"/>
</dbReference>
<dbReference type="GeneID" id="831084"/>
<dbReference type="Gramene" id="AT5G12110.1">
    <property type="protein sequence ID" value="AT5G12110.1"/>
    <property type="gene ID" value="AT5G12110"/>
</dbReference>
<dbReference type="KEGG" id="ath:AT5G12110"/>
<dbReference type="Araport" id="AT5G12110"/>
<dbReference type="TAIR" id="AT5G12110"/>
<dbReference type="eggNOG" id="KOG1668">
    <property type="taxonomic scope" value="Eukaryota"/>
</dbReference>
<dbReference type="HOGENOM" id="CLU_050172_3_0_1"/>
<dbReference type="InParanoid" id="Q84WM9"/>
<dbReference type="OMA" id="NVARWFA"/>
<dbReference type="PhylomeDB" id="Q84WM9"/>
<dbReference type="CD-CODE" id="4299E36E">
    <property type="entry name" value="Nucleolus"/>
</dbReference>
<dbReference type="PRO" id="PR:Q84WM9"/>
<dbReference type="Proteomes" id="UP000006548">
    <property type="component" value="Chromosome 5"/>
</dbReference>
<dbReference type="ExpressionAtlas" id="Q84WM9">
    <property type="expression patterns" value="baseline and differential"/>
</dbReference>
<dbReference type="GO" id="GO:0005829">
    <property type="term" value="C:cytosol"/>
    <property type="evidence" value="ECO:0007005"/>
    <property type="project" value="TAIR"/>
</dbReference>
<dbReference type="GO" id="GO:0005853">
    <property type="term" value="C:eukaryotic translation elongation factor 1 complex"/>
    <property type="evidence" value="ECO:0007669"/>
    <property type="project" value="InterPro"/>
</dbReference>
<dbReference type="GO" id="GO:0005886">
    <property type="term" value="C:plasma membrane"/>
    <property type="evidence" value="ECO:0007669"/>
    <property type="project" value="UniProtKB-SubCell"/>
</dbReference>
<dbReference type="GO" id="GO:0009536">
    <property type="term" value="C:plastid"/>
    <property type="evidence" value="ECO:0007005"/>
    <property type="project" value="TAIR"/>
</dbReference>
<dbReference type="GO" id="GO:0003746">
    <property type="term" value="F:translation elongation factor activity"/>
    <property type="evidence" value="ECO:0007669"/>
    <property type="project" value="UniProtKB-KW"/>
</dbReference>
<dbReference type="CDD" id="cd00292">
    <property type="entry name" value="EF1B"/>
    <property type="match status" value="1"/>
</dbReference>
<dbReference type="FunFam" id="3.30.70.60:FF:000001">
    <property type="entry name" value="Elongation factor 1-beta 1 like"/>
    <property type="match status" value="1"/>
</dbReference>
<dbReference type="Gene3D" id="1.20.1050.10">
    <property type="match status" value="1"/>
</dbReference>
<dbReference type="Gene3D" id="3.30.70.60">
    <property type="match status" value="1"/>
</dbReference>
<dbReference type="InterPro" id="IPR036219">
    <property type="entry name" value="eEF-1beta-like_sf"/>
</dbReference>
<dbReference type="InterPro" id="IPR049720">
    <property type="entry name" value="EF1B_bsu/dsu"/>
</dbReference>
<dbReference type="InterPro" id="IPR014038">
    <property type="entry name" value="EF1B_bsu/dsu_GNE"/>
</dbReference>
<dbReference type="InterPro" id="IPR036282">
    <property type="entry name" value="Glutathione-S-Trfase_C_sf"/>
</dbReference>
<dbReference type="InterPro" id="IPR014717">
    <property type="entry name" value="Transl_elong_EF1B/ribsomal_bS6"/>
</dbReference>
<dbReference type="InterPro" id="IPR001326">
    <property type="entry name" value="Transl_elong_EF1B_B/D_CS"/>
</dbReference>
<dbReference type="PANTHER" id="PTHR11595">
    <property type="entry name" value="EF-HAND AND COILED-COIL DOMAIN-CONTAINING FAMILY MEMBER"/>
    <property type="match status" value="1"/>
</dbReference>
<dbReference type="PANTHER" id="PTHR11595:SF84">
    <property type="entry name" value="ELONGATION FACTOR 1-BETA 1"/>
    <property type="match status" value="1"/>
</dbReference>
<dbReference type="Pfam" id="PF00736">
    <property type="entry name" value="EF1_GNE"/>
    <property type="match status" value="1"/>
</dbReference>
<dbReference type="SMART" id="SM00888">
    <property type="entry name" value="EF1_GNE"/>
    <property type="match status" value="1"/>
</dbReference>
<dbReference type="SUPFAM" id="SSF54984">
    <property type="entry name" value="eEF-1beta-like"/>
    <property type="match status" value="1"/>
</dbReference>
<dbReference type="SUPFAM" id="SSF47616">
    <property type="entry name" value="GST C-terminal domain-like"/>
    <property type="match status" value="1"/>
</dbReference>
<dbReference type="PROSITE" id="PS00825">
    <property type="entry name" value="EF1BD_2"/>
    <property type="match status" value="1"/>
</dbReference>
<sequence>MAVTFSDLHTERGLKTLEEHLAGKTYISGDQLSVDDVKVYAAVLENPGDGFPNASKWYDSVASHLAKSFPGKADGVRVGGGVAPPSEAHPHTEEPAADGDGDDDDDIDLFADETEDEKKAAEEREAAKKDTKKTKESGKSSVLLEVKPWDDETDMKKLEEAVRSVQMPGLTWGASKLVPVGYGIKKLTIMMTIVDDLVSVDNLIEDHLTSEPNNEYIQSVDIVAFNKI</sequence>
<proteinExistence type="evidence at transcript level"/>
<protein>
    <recommendedName>
        <fullName>Elongation factor 1-beta 1</fullName>
        <shortName>EF-1-beta 1</shortName>
    </recommendedName>
    <alternativeName>
        <fullName>Elongation factor 1-beta' 1</fullName>
        <shortName>EF-1-beta' 1</shortName>
    </alternativeName>
    <alternativeName>
        <fullName>Elongation factor 1B-alpha 1</fullName>
    </alternativeName>
    <alternativeName>
        <fullName>eEF-1B alpha 1</fullName>
    </alternativeName>
</protein>
<name>EF1B1_ARATH</name>
<reference key="1">
    <citation type="journal article" date="1999" name="FEBS Lett.">
        <title>Molecular cloning and characterization of the Arabidopsis thaliana alpha-subunit of elongation factor 1B.</title>
        <authorList>
            <person name="Hericourt F."/>
            <person name="Jupin I."/>
        </authorList>
    </citation>
    <scope>NUCLEOTIDE SEQUENCE [MRNA]</scope>
    <scope>FUNCTION</scope>
</reference>
<reference key="2">
    <citation type="journal article" date="1997" name="DNA Res.">
        <title>Structural analysis of Arabidopsis thaliana chromosome 5. III. Sequence features of the regions of 1,191,918 bp covered by seventeen physically assigned P1 clones.</title>
        <authorList>
            <person name="Nakamura Y."/>
            <person name="Sato S."/>
            <person name="Kaneko T."/>
            <person name="Kotani H."/>
            <person name="Asamizu E."/>
            <person name="Miyajima N."/>
            <person name="Tabata S."/>
        </authorList>
    </citation>
    <scope>NUCLEOTIDE SEQUENCE [LARGE SCALE GENOMIC DNA]</scope>
    <source>
        <strain>cv. Columbia</strain>
    </source>
</reference>
<reference key="3">
    <citation type="journal article" date="2017" name="Plant J.">
        <title>Araport11: a complete reannotation of the Arabidopsis thaliana reference genome.</title>
        <authorList>
            <person name="Cheng C.Y."/>
            <person name="Krishnakumar V."/>
            <person name="Chan A.P."/>
            <person name="Thibaud-Nissen F."/>
            <person name="Schobel S."/>
            <person name="Town C.D."/>
        </authorList>
    </citation>
    <scope>GENOME REANNOTATION</scope>
    <source>
        <strain>cv. Columbia</strain>
    </source>
</reference>
<reference key="4">
    <citation type="journal article" date="2003" name="Science">
        <title>Empirical analysis of transcriptional activity in the Arabidopsis genome.</title>
        <authorList>
            <person name="Yamada K."/>
            <person name="Lim J."/>
            <person name="Dale J.M."/>
            <person name="Chen H."/>
            <person name="Shinn P."/>
            <person name="Palm C.J."/>
            <person name="Southwick A.M."/>
            <person name="Wu H.C."/>
            <person name="Kim C.J."/>
            <person name="Nguyen M."/>
            <person name="Pham P.K."/>
            <person name="Cheuk R.F."/>
            <person name="Karlin-Newmann G."/>
            <person name="Liu S.X."/>
            <person name="Lam B."/>
            <person name="Sakano H."/>
            <person name="Wu T."/>
            <person name="Yu G."/>
            <person name="Miranda M."/>
            <person name="Quach H.L."/>
            <person name="Tripp M."/>
            <person name="Chang C.H."/>
            <person name="Lee J.M."/>
            <person name="Toriumi M.J."/>
            <person name="Chan M.M."/>
            <person name="Tang C.C."/>
            <person name="Onodera C.S."/>
            <person name="Deng J.M."/>
            <person name="Akiyama K."/>
            <person name="Ansari Y."/>
            <person name="Arakawa T."/>
            <person name="Banh J."/>
            <person name="Banno F."/>
            <person name="Bowser L."/>
            <person name="Brooks S.Y."/>
            <person name="Carninci P."/>
            <person name="Chao Q."/>
            <person name="Choy N."/>
            <person name="Enju A."/>
            <person name="Goldsmith A.D."/>
            <person name="Gurjal M."/>
            <person name="Hansen N.F."/>
            <person name="Hayashizaki Y."/>
            <person name="Johnson-Hopson C."/>
            <person name="Hsuan V.W."/>
            <person name="Iida K."/>
            <person name="Karnes M."/>
            <person name="Khan S."/>
            <person name="Koesema E."/>
            <person name="Ishida J."/>
            <person name="Jiang P.X."/>
            <person name="Jones T."/>
            <person name="Kawai J."/>
            <person name="Kamiya A."/>
            <person name="Meyers C."/>
            <person name="Nakajima M."/>
            <person name="Narusaka M."/>
            <person name="Seki M."/>
            <person name="Sakurai T."/>
            <person name="Satou M."/>
            <person name="Tamse R."/>
            <person name="Vaysberg M."/>
            <person name="Wallender E.K."/>
            <person name="Wong C."/>
            <person name="Yamamura Y."/>
            <person name="Yuan S."/>
            <person name="Shinozaki K."/>
            <person name="Davis R.W."/>
            <person name="Theologis A."/>
            <person name="Ecker J.R."/>
        </authorList>
    </citation>
    <scope>NUCLEOTIDE SEQUENCE [LARGE SCALE MRNA] OF 19-228</scope>
    <source>
        <strain>cv. Columbia</strain>
    </source>
</reference>
<comment type="function">
    <text evidence="4">EF-1-beta and EF-1-delta stimulate the exchange of GDP bound to EF-1-alpha to GTP.</text>
</comment>
<comment type="subunit">
    <text evidence="1">EF-1 is composed of 4 subunits: alpha, beta (1B-alpha=beta'), delta (1B-beta), and gamma (1B-gamma).</text>
</comment>
<comment type="subcellular location">
    <subcellularLocation>
        <location evidence="1">Cell membrane</location>
        <topology evidence="1">Peripheral membrane protein</topology>
    </subcellularLocation>
</comment>
<comment type="similarity">
    <text evidence="5">Belongs to the EF-1-beta/EF-1-delta family.</text>
</comment>
<keyword id="KW-0007">Acetylation</keyword>
<keyword id="KW-1003">Cell membrane</keyword>
<keyword id="KW-0251">Elongation factor</keyword>
<keyword id="KW-0472">Membrane</keyword>
<keyword id="KW-0648">Protein biosynthesis</keyword>
<keyword id="KW-1185">Reference proteome</keyword>
<accession>Q84WM9</accession>
<accession>Q9SCX2</accession>
<accession>Q9SCX4</accession>
<feature type="initiator methionine" description="Removed" evidence="2">
    <location>
        <position position="1"/>
    </location>
</feature>
<feature type="chain" id="PRO_0000155031" description="Elongation factor 1-beta 1">
    <location>
        <begin position="2"/>
        <end position="228"/>
    </location>
</feature>
<feature type="domain" description="GST C-terminal">
    <location>
        <begin position="14"/>
        <end position="65"/>
    </location>
</feature>
<feature type="region of interest" description="Disordered" evidence="3">
    <location>
        <begin position="75"/>
        <end position="139"/>
    </location>
</feature>
<feature type="compositionally biased region" description="Acidic residues" evidence="3">
    <location>
        <begin position="95"/>
        <end position="115"/>
    </location>
</feature>
<feature type="compositionally biased region" description="Basic and acidic residues" evidence="3">
    <location>
        <begin position="116"/>
        <end position="138"/>
    </location>
</feature>
<feature type="modified residue" description="N-acetylalanine" evidence="2">
    <location>
        <position position="2"/>
    </location>
</feature>
<gene>
    <name type="ordered locus">At5g12110</name>
    <name type="ORF">MXC9.7</name>
</gene>